<feature type="chain" id="PRO_0000061887" description="Cytochrome b6-f complex subunit 4">
    <location>
        <begin position="1"/>
        <end position="160"/>
    </location>
</feature>
<feature type="transmembrane region" description="Helical" evidence="2">
    <location>
        <begin position="36"/>
        <end position="56"/>
    </location>
</feature>
<feature type="transmembrane region" description="Helical" evidence="2">
    <location>
        <begin position="95"/>
        <end position="115"/>
    </location>
</feature>
<feature type="transmembrane region" description="Helical" evidence="2">
    <location>
        <begin position="131"/>
        <end position="151"/>
    </location>
</feature>
<geneLocation type="chloroplast"/>
<dbReference type="EMBL" id="AP004638">
    <property type="protein sequence ID" value="BAB84247.1"/>
    <property type="molecule type" value="Genomic_DNA"/>
</dbReference>
<dbReference type="RefSeq" id="NP_569659.1">
    <property type="nucleotide sequence ID" value="NC_003386.1"/>
</dbReference>
<dbReference type="SMR" id="Q8WHZ2"/>
<dbReference type="GeneID" id="2545129"/>
<dbReference type="GO" id="GO:0009535">
    <property type="term" value="C:chloroplast thylakoid membrane"/>
    <property type="evidence" value="ECO:0007669"/>
    <property type="project" value="UniProtKB-SubCell"/>
</dbReference>
<dbReference type="GO" id="GO:0005739">
    <property type="term" value="C:mitochondrion"/>
    <property type="evidence" value="ECO:0007669"/>
    <property type="project" value="GOC"/>
</dbReference>
<dbReference type="GO" id="GO:0045158">
    <property type="term" value="F:electron transporter, transferring electrons within cytochrome b6/f complex of photosystem II activity"/>
    <property type="evidence" value="ECO:0007669"/>
    <property type="project" value="UniProtKB-UniRule"/>
</dbReference>
<dbReference type="GO" id="GO:0045156">
    <property type="term" value="F:electron transporter, transferring electrons within the cyclic electron transport pathway of photosynthesis activity"/>
    <property type="evidence" value="ECO:0007669"/>
    <property type="project" value="InterPro"/>
</dbReference>
<dbReference type="GO" id="GO:0008121">
    <property type="term" value="F:ubiquinol-cytochrome-c reductase activity"/>
    <property type="evidence" value="ECO:0007669"/>
    <property type="project" value="TreeGrafter"/>
</dbReference>
<dbReference type="GO" id="GO:0006122">
    <property type="term" value="P:mitochondrial electron transport, ubiquinol to cytochrome c"/>
    <property type="evidence" value="ECO:0007669"/>
    <property type="project" value="TreeGrafter"/>
</dbReference>
<dbReference type="GO" id="GO:0009767">
    <property type="term" value="P:photosynthetic electron transport chain"/>
    <property type="evidence" value="ECO:0007669"/>
    <property type="project" value="InterPro"/>
</dbReference>
<dbReference type="CDD" id="cd00290">
    <property type="entry name" value="cytochrome_b_C"/>
    <property type="match status" value="1"/>
</dbReference>
<dbReference type="FunFam" id="1.10.287.980:FF:000001">
    <property type="entry name" value="Cytochrome b6-f complex subunit 4"/>
    <property type="match status" value="1"/>
</dbReference>
<dbReference type="FunFam" id="1.20.5.510:FF:000002">
    <property type="entry name" value="Cytochrome b6-f complex subunit 4"/>
    <property type="match status" value="1"/>
</dbReference>
<dbReference type="Gene3D" id="1.10.287.980">
    <property type="entry name" value="plastocyanin oxidoreductase"/>
    <property type="match status" value="1"/>
</dbReference>
<dbReference type="Gene3D" id="1.20.5.510">
    <property type="entry name" value="Single helix bin"/>
    <property type="match status" value="1"/>
</dbReference>
<dbReference type="HAMAP" id="MF_01344">
    <property type="entry name" value="Cytb6_f_subIV"/>
    <property type="match status" value="1"/>
</dbReference>
<dbReference type="InterPro" id="IPR005798">
    <property type="entry name" value="Cyt_b/b6_C"/>
</dbReference>
<dbReference type="InterPro" id="IPR036150">
    <property type="entry name" value="Cyt_b/b6_C_sf"/>
</dbReference>
<dbReference type="InterPro" id="IPR005870">
    <property type="entry name" value="Cyt_b6/f_cplx_suIV"/>
</dbReference>
<dbReference type="InterPro" id="IPR048260">
    <property type="entry name" value="Cytochrome_b_C_euk/bac"/>
</dbReference>
<dbReference type="NCBIfam" id="TIGR01156">
    <property type="entry name" value="cytb6_f_IV"/>
    <property type="match status" value="1"/>
</dbReference>
<dbReference type="PANTHER" id="PTHR19271">
    <property type="entry name" value="CYTOCHROME B"/>
    <property type="match status" value="1"/>
</dbReference>
<dbReference type="PANTHER" id="PTHR19271:SF41">
    <property type="entry name" value="CYTOCHROME B_B6 C-TERMINAL REGION PROFILE DOMAIN-CONTAINING PROTEIN"/>
    <property type="match status" value="1"/>
</dbReference>
<dbReference type="Pfam" id="PF00032">
    <property type="entry name" value="Cytochrom_B_C"/>
    <property type="match status" value="1"/>
</dbReference>
<dbReference type="PIRSF" id="PIRSF000033">
    <property type="entry name" value="B6f_17K"/>
    <property type="match status" value="1"/>
</dbReference>
<dbReference type="SUPFAM" id="SSF81648">
    <property type="entry name" value="a domain/subunit of cytochrome bc1 complex (Ubiquinol-cytochrome c reductase)"/>
    <property type="match status" value="1"/>
</dbReference>
<dbReference type="PROSITE" id="PS51003">
    <property type="entry name" value="CYTB_CTER"/>
    <property type="match status" value="1"/>
</dbReference>
<reference key="1">
    <citation type="journal article" date="2004" name="Mol. Biol. Evol.">
        <title>Chloroplast phylogeny indicates that bryophytes are monophyletic.</title>
        <authorList>
            <person name="Nishiyama T."/>
            <person name="Wolf P.G."/>
            <person name="Kugita M."/>
            <person name="Sinclair R.B."/>
            <person name="Sugita M."/>
            <person name="Sugiura C."/>
            <person name="Wakasugi T."/>
            <person name="Yamada K."/>
            <person name="Yoshinaga K."/>
            <person name="Yamaguchi K."/>
            <person name="Ueda K."/>
            <person name="Hasebe M."/>
        </authorList>
    </citation>
    <scope>NUCLEOTIDE SEQUENCE [LARGE SCALE GENOMIC DNA]</scope>
    <source>
        <strain>Kingyoku</strain>
    </source>
</reference>
<keyword id="KW-0150">Chloroplast</keyword>
<keyword id="KW-0249">Electron transport</keyword>
<keyword id="KW-0472">Membrane</keyword>
<keyword id="KW-0602">Photosynthesis</keyword>
<keyword id="KW-0934">Plastid</keyword>
<keyword id="KW-0793">Thylakoid</keyword>
<keyword id="KW-0812">Transmembrane</keyword>
<keyword id="KW-1133">Transmembrane helix</keyword>
<keyword id="KW-0813">Transport</keyword>
<evidence type="ECO:0000250" key="1"/>
<evidence type="ECO:0000255" key="2">
    <source>
        <dbReference type="HAMAP-Rule" id="MF_01344"/>
    </source>
</evidence>
<organism>
    <name type="scientific">Psilotum nudum</name>
    <name type="common">Whisk fern</name>
    <name type="synonym">Lycopodium nudum</name>
    <dbReference type="NCBI Taxonomy" id="3240"/>
    <lineage>
        <taxon>Eukaryota</taxon>
        <taxon>Viridiplantae</taxon>
        <taxon>Streptophyta</taxon>
        <taxon>Embryophyta</taxon>
        <taxon>Tracheophyta</taxon>
        <taxon>Polypodiopsida</taxon>
        <taxon>Ophioglossidae</taxon>
        <taxon>Psilotales</taxon>
        <taxon>Psilotaceae</taxon>
        <taxon>Psilotum</taxon>
    </lineage>
</organism>
<proteinExistence type="inferred from homology"/>
<name>PETD_PSINU</name>
<protein>
    <recommendedName>
        <fullName evidence="2">Cytochrome b6-f complex subunit 4</fullName>
    </recommendedName>
    <alternativeName>
        <fullName evidence="2">17 kDa polypeptide</fullName>
    </alternativeName>
</protein>
<sequence>MGVTKKPDLNDPVSRAKLAKGMGHNYYGEPAWPNDLLYIFPIVILGTIACIAGLAVLEPSMIGEPANPFATPLEILPEWYFYPVFQILRTVPNKLLGVLLMASVPAGLLTVPFLENVNKFQNPFRRPVATTVFLIGTVVAIWLGIGAALPIDRSLTLGLF</sequence>
<comment type="function">
    <text evidence="2">Component of the cytochrome b6-f complex, which mediates electron transfer between photosystem II (PSII) and photosystem I (PSI), cyclic electron flow around PSI, and state transitions.</text>
</comment>
<comment type="subunit">
    <text evidence="1">The 4 large subunits of the cytochrome b6-f complex are cytochrome b6, subunit IV (17 kDa polypeptide, petD), cytochrome f and the Rieske protein, while the 4 small subunits are petG, petL, petM and petN. The complex functions as a dimer (By similarity).</text>
</comment>
<comment type="subcellular location">
    <subcellularLocation>
        <location evidence="2">Plastid</location>
        <location evidence="2">Chloroplast thylakoid membrane</location>
        <topology evidence="2">Multi-pass membrane protein</topology>
    </subcellularLocation>
</comment>
<comment type="similarity">
    <text evidence="2">Belongs to the cytochrome b family. PetD subfamily.</text>
</comment>
<accession>Q8WHZ2</accession>
<gene>
    <name evidence="2" type="primary">petD</name>
</gene>